<keyword id="KW-0021">Allosteric enzyme</keyword>
<keyword id="KW-0067">ATP-binding</keyword>
<keyword id="KW-0963">Cytoplasm</keyword>
<keyword id="KW-0324">Glycolysis</keyword>
<keyword id="KW-0418">Kinase</keyword>
<keyword id="KW-0460">Magnesium</keyword>
<keyword id="KW-0479">Metal-binding</keyword>
<keyword id="KW-0547">Nucleotide-binding</keyword>
<keyword id="KW-0808">Transferase</keyword>
<proteinExistence type="inferred from homology"/>
<reference key="1">
    <citation type="journal article" date="2012" name="BMC Genomics">
        <title>Comparative genomics and transcriptomics of lineages I, II, and III strains of Listeria monocytogenes.</title>
        <authorList>
            <person name="Hain T."/>
            <person name="Ghai R."/>
            <person name="Billion A."/>
            <person name="Kuenne C.T."/>
            <person name="Steinweg C."/>
            <person name="Izar B."/>
            <person name="Mohamed W."/>
            <person name="Mraheil M."/>
            <person name="Domann E."/>
            <person name="Schaffrath S."/>
            <person name="Karst U."/>
            <person name="Goesmann A."/>
            <person name="Oehm S."/>
            <person name="Puhler A."/>
            <person name="Merkl R."/>
            <person name="Vorwerk S."/>
            <person name="Glaser P."/>
            <person name="Garrido P."/>
            <person name="Rusniok C."/>
            <person name="Buchrieser C."/>
            <person name="Goebel W."/>
            <person name="Chakraborty T."/>
        </authorList>
    </citation>
    <scope>NUCLEOTIDE SEQUENCE [LARGE SCALE GENOMIC DNA]</scope>
    <source>
        <strain>CLIP80459</strain>
    </source>
</reference>
<sequence length="319" mass="34420">MKRIAILTSGGDAPGMNAATRAVVRKAIYEGLEVYGINYGFLGLVNGDIRKLELGSVGDLLHRGGTFLYSARYPEFATEEGQLKGIEQLKKHQIDGLVVIGGDGSYHGAEALTKRGFPTIGIPGTIDNDISGTDFTIGFDTALNTVLDALDKIRDTATSHERTFIIEVMGRDAGDIALWSGLAGGAEAIIVPEESFNMDDVVDRLNKGRERGKKHSIIVVAEGVMSGNEFAKQLAEYGDYHARVTVLGHVQRGGSPTAFDRVLASRLGARSVELLLENRGGLAVGIRENRIVENDISEILKEKHTLDQKLFDLASILSI</sequence>
<dbReference type="EC" id="2.7.1.11" evidence="1"/>
<dbReference type="EMBL" id="FM242711">
    <property type="protein sequence ID" value="CAS05343.1"/>
    <property type="molecule type" value="Genomic_DNA"/>
</dbReference>
<dbReference type="RefSeq" id="WP_003723299.1">
    <property type="nucleotide sequence ID" value="NC_012488.1"/>
</dbReference>
<dbReference type="SMR" id="C1KVL8"/>
<dbReference type="GeneID" id="93239450"/>
<dbReference type="KEGG" id="lmc:Lm4b_01582"/>
<dbReference type="HOGENOM" id="CLU_020655_0_1_9"/>
<dbReference type="UniPathway" id="UPA00109">
    <property type="reaction ID" value="UER00182"/>
</dbReference>
<dbReference type="GO" id="GO:0005945">
    <property type="term" value="C:6-phosphofructokinase complex"/>
    <property type="evidence" value="ECO:0007669"/>
    <property type="project" value="TreeGrafter"/>
</dbReference>
<dbReference type="GO" id="GO:0003872">
    <property type="term" value="F:6-phosphofructokinase activity"/>
    <property type="evidence" value="ECO:0007669"/>
    <property type="project" value="UniProtKB-UniRule"/>
</dbReference>
<dbReference type="GO" id="GO:0016208">
    <property type="term" value="F:AMP binding"/>
    <property type="evidence" value="ECO:0007669"/>
    <property type="project" value="TreeGrafter"/>
</dbReference>
<dbReference type="GO" id="GO:0005524">
    <property type="term" value="F:ATP binding"/>
    <property type="evidence" value="ECO:0007669"/>
    <property type="project" value="UniProtKB-KW"/>
</dbReference>
<dbReference type="GO" id="GO:0070095">
    <property type="term" value="F:fructose-6-phosphate binding"/>
    <property type="evidence" value="ECO:0007669"/>
    <property type="project" value="TreeGrafter"/>
</dbReference>
<dbReference type="GO" id="GO:0042802">
    <property type="term" value="F:identical protein binding"/>
    <property type="evidence" value="ECO:0007669"/>
    <property type="project" value="TreeGrafter"/>
</dbReference>
<dbReference type="GO" id="GO:0046872">
    <property type="term" value="F:metal ion binding"/>
    <property type="evidence" value="ECO:0007669"/>
    <property type="project" value="UniProtKB-KW"/>
</dbReference>
<dbReference type="GO" id="GO:0048029">
    <property type="term" value="F:monosaccharide binding"/>
    <property type="evidence" value="ECO:0007669"/>
    <property type="project" value="TreeGrafter"/>
</dbReference>
<dbReference type="GO" id="GO:0061621">
    <property type="term" value="P:canonical glycolysis"/>
    <property type="evidence" value="ECO:0007669"/>
    <property type="project" value="TreeGrafter"/>
</dbReference>
<dbReference type="GO" id="GO:0030388">
    <property type="term" value="P:fructose 1,6-bisphosphate metabolic process"/>
    <property type="evidence" value="ECO:0007669"/>
    <property type="project" value="TreeGrafter"/>
</dbReference>
<dbReference type="GO" id="GO:0006002">
    <property type="term" value="P:fructose 6-phosphate metabolic process"/>
    <property type="evidence" value="ECO:0007669"/>
    <property type="project" value="InterPro"/>
</dbReference>
<dbReference type="CDD" id="cd00763">
    <property type="entry name" value="Bacterial_PFK"/>
    <property type="match status" value="1"/>
</dbReference>
<dbReference type="FunFam" id="3.40.50.450:FF:000001">
    <property type="entry name" value="ATP-dependent 6-phosphofructokinase"/>
    <property type="match status" value="1"/>
</dbReference>
<dbReference type="FunFam" id="3.40.50.460:FF:000002">
    <property type="entry name" value="ATP-dependent 6-phosphofructokinase"/>
    <property type="match status" value="1"/>
</dbReference>
<dbReference type="Gene3D" id="3.40.50.450">
    <property type="match status" value="1"/>
</dbReference>
<dbReference type="Gene3D" id="3.40.50.460">
    <property type="entry name" value="Phosphofructokinase domain"/>
    <property type="match status" value="1"/>
</dbReference>
<dbReference type="HAMAP" id="MF_00339">
    <property type="entry name" value="Phosphofructokinase_I_B1"/>
    <property type="match status" value="1"/>
</dbReference>
<dbReference type="InterPro" id="IPR022953">
    <property type="entry name" value="ATP_PFK"/>
</dbReference>
<dbReference type="InterPro" id="IPR012003">
    <property type="entry name" value="ATP_PFK_prok-type"/>
</dbReference>
<dbReference type="InterPro" id="IPR012828">
    <property type="entry name" value="PFKA_ATP_prok"/>
</dbReference>
<dbReference type="InterPro" id="IPR015912">
    <property type="entry name" value="Phosphofructokinase_CS"/>
</dbReference>
<dbReference type="InterPro" id="IPR000023">
    <property type="entry name" value="Phosphofructokinase_dom"/>
</dbReference>
<dbReference type="InterPro" id="IPR035966">
    <property type="entry name" value="PKF_sf"/>
</dbReference>
<dbReference type="NCBIfam" id="TIGR02482">
    <property type="entry name" value="PFKA_ATP"/>
    <property type="match status" value="1"/>
</dbReference>
<dbReference type="NCBIfam" id="NF002872">
    <property type="entry name" value="PRK03202.1"/>
    <property type="match status" value="1"/>
</dbReference>
<dbReference type="PANTHER" id="PTHR13697:SF4">
    <property type="entry name" value="ATP-DEPENDENT 6-PHOSPHOFRUCTOKINASE"/>
    <property type="match status" value="1"/>
</dbReference>
<dbReference type="PANTHER" id="PTHR13697">
    <property type="entry name" value="PHOSPHOFRUCTOKINASE"/>
    <property type="match status" value="1"/>
</dbReference>
<dbReference type="Pfam" id="PF00365">
    <property type="entry name" value="PFK"/>
    <property type="match status" value="1"/>
</dbReference>
<dbReference type="PIRSF" id="PIRSF000532">
    <property type="entry name" value="ATP_PFK_prok"/>
    <property type="match status" value="1"/>
</dbReference>
<dbReference type="PRINTS" id="PR00476">
    <property type="entry name" value="PHFRCTKINASE"/>
</dbReference>
<dbReference type="SUPFAM" id="SSF53784">
    <property type="entry name" value="Phosphofructokinase"/>
    <property type="match status" value="1"/>
</dbReference>
<dbReference type="PROSITE" id="PS00433">
    <property type="entry name" value="PHOSPHOFRUCTOKINASE"/>
    <property type="match status" value="1"/>
</dbReference>
<name>PFKA_LISMC</name>
<comment type="function">
    <text evidence="1">Catalyzes the phosphorylation of D-fructose 6-phosphate to fructose 1,6-bisphosphate by ATP, the first committing step of glycolysis.</text>
</comment>
<comment type="catalytic activity">
    <reaction evidence="1">
        <text>beta-D-fructose 6-phosphate + ATP = beta-D-fructose 1,6-bisphosphate + ADP + H(+)</text>
        <dbReference type="Rhea" id="RHEA:16109"/>
        <dbReference type="ChEBI" id="CHEBI:15378"/>
        <dbReference type="ChEBI" id="CHEBI:30616"/>
        <dbReference type="ChEBI" id="CHEBI:32966"/>
        <dbReference type="ChEBI" id="CHEBI:57634"/>
        <dbReference type="ChEBI" id="CHEBI:456216"/>
        <dbReference type="EC" id="2.7.1.11"/>
    </reaction>
</comment>
<comment type="cofactor">
    <cofactor evidence="1">
        <name>Mg(2+)</name>
        <dbReference type="ChEBI" id="CHEBI:18420"/>
    </cofactor>
</comment>
<comment type="activity regulation">
    <text evidence="1">Allosterically activated by ADP and other diphosphonucleosides, and allosterically inhibited by phosphoenolpyruvate.</text>
</comment>
<comment type="pathway">
    <text evidence="1">Carbohydrate degradation; glycolysis; D-glyceraldehyde 3-phosphate and glycerone phosphate from D-glucose: step 3/4.</text>
</comment>
<comment type="subunit">
    <text evidence="1">Homotetramer.</text>
</comment>
<comment type="subcellular location">
    <subcellularLocation>
        <location evidence="1">Cytoplasm</location>
    </subcellularLocation>
</comment>
<comment type="similarity">
    <text evidence="1">Belongs to the phosphofructokinase type A (PFKA) family. ATP-dependent PFK group I subfamily. Prokaryotic clade 'B1' sub-subfamily.</text>
</comment>
<evidence type="ECO:0000255" key="1">
    <source>
        <dbReference type="HAMAP-Rule" id="MF_00339"/>
    </source>
</evidence>
<feature type="chain" id="PRO_1000205249" description="ATP-dependent 6-phosphofructokinase">
    <location>
        <begin position="1"/>
        <end position="319"/>
    </location>
</feature>
<feature type="active site" description="Proton acceptor" evidence="1">
    <location>
        <position position="127"/>
    </location>
</feature>
<feature type="binding site" evidence="1">
    <location>
        <position position="11"/>
    </location>
    <ligand>
        <name>ATP</name>
        <dbReference type="ChEBI" id="CHEBI:30616"/>
    </ligand>
</feature>
<feature type="binding site" evidence="1">
    <location>
        <begin position="21"/>
        <end position="25"/>
    </location>
    <ligand>
        <name>ADP</name>
        <dbReference type="ChEBI" id="CHEBI:456216"/>
        <note>allosteric activator; ligand shared between dimeric partners</note>
    </ligand>
</feature>
<feature type="binding site" evidence="1">
    <location>
        <begin position="72"/>
        <end position="73"/>
    </location>
    <ligand>
        <name>ATP</name>
        <dbReference type="ChEBI" id="CHEBI:30616"/>
    </ligand>
</feature>
<feature type="binding site" evidence="1">
    <location>
        <begin position="102"/>
        <end position="105"/>
    </location>
    <ligand>
        <name>ATP</name>
        <dbReference type="ChEBI" id="CHEBI:30616"/>
    </ligand>
</feature>
<feature type="binding site" evidence="1">
    <location>
        <position position="103"/>
    </location>
    <ligand>
        <name>Mg(2+)</name>
        <dbReference type="ChEBI" id="CHEBI:18420"/>
        <note>catalytic</note>
    </ligand>
</feature>
<feature type="binding site" description="in other chain" evidence="1">
    <location>
        <begin position="125"/>
        <end position="127"/>
    </location>
    <ligand>
        <name>substrate</name>
        <note>ligand shared between dimeric partners</note>
    </ligand>
</feature>
<feature type="binding site" description="in other chain" evidence="1">
    <location>
        <position position="154"/>
    </location>
    <ligand>
        <name>ADP</name>
        <dbReference type="ChEBI" id="CHEBI:456216"/>
        <note>allosteric activator; ligand shared between dimeric partners</note>
    </ligand>
</feature>
<feature type="binding site" evidence="1">
    <location>
        <position position="162"/>
    </location>
    <ligand>
        <name>substrate</name>
        <note>ligand shared between dimeric partners</note>
    </ligand>
</feature>
<feature type="binding site" description="in other chain" evidence="1">
    <location>
        <begin position="169"/>
        <end position="171"/>
    </location>
    <ligand>
        <name>substrate</name>
        <note>ligand shared between dimeric partners</note>
    </ligand>
</feature>
<feature type="binding site" description="in other chain" evidence="1">
    <location>
        <begin position="185"/>
        <end position="187"/>
    </location>
    <ligand>
        <name>ADP</name>
        <dbReference type="ChEBI" id="CHEBI:456216"/>
        <note>allosteric activator; ligand shared between dimeric partners</note>
    </ligand>
</feature>
<feature type="binding site" description="in other chain" evidence="1">
    <location>
        <position position="211"/>
    </location>
    <ligand>
        <name>ADP</name>
        <dbReference type="ChEBI" id="CHEBI:456216"/>
        <note>allosteric activator; ligand shared between dimeric partners</note>
    </ligand>
</feature>
<feature type="binding site" description="in other chain" evidence="1">
    <location>
        <begin position="213"/>
        <end position="215"/>
    </location>
    <ligand>
        <name>ADP</name>
        <dbReference type="ChEBI" id="CHEBI:456216"/>
        <note>allosteric activator; ligand shared between dimeric partners</note>
    </ligand>
</feature>
<feature type="binding site" description="in other chain" evidence="1">
    <location>
        <position position="222"/>
    </location>
    <ligand>
        <name>substrate</name>
        <note>ligand shared between dimeric partners</note>
    </ligand>
</feature>
<feature type="binding site" evidence="1">
    <location>
        <position position="243"/>
    </location>
    <ligand>
        <name>substrate</name>
        <note>ligand shared between dimeric partners</note>
    </ligand>
</feature>
<feature type="binding site" description="in other chain" evidence="1">
    <location>
        <begin position="249"/>
        <end position="252"/>
    </location>
    <ligand>
        <name>substrate</name>
        <note>ligand shared between dimeric partners</note>
    </ligand>
</feature>
<gene>
    <name evidence="1" type="primary">pfkA</name>
    <name type="ordered locus">Lm4b_01582</name>
</gene>
<organism>
    <name type="scientific">Listeria monocytogenes serotype 4b (strain CLIP80459)</name>
    <dbReference type="NCBI Taxonomy" id="568819"/>
    <lineage>
        <taxon>Bacteria</taxon>
        <taxon>Bacillati</taxon>
        <taxon>Bacillota</taxon>
        <taxon>Bacilli</taxon>
        <taxon>Bacillales</taxon>
        <taxon>Listeriaceae</taxon>
        <taxon>Listeria</taxon>
    </lineage>
</organism>
<accession>C1KVL8</accession>
<protein>
    <recommendedName>
        <fullName evidence="1">ATP-dependent 6-phosphofructokinase</fullName>
        <shortName evidence="1">ATP-PFK</shortName>
        <shortName evidence="1">Phosphofructokinase</shortName>
        <ecNumber evidence="1">2.7.1.11</ecNumber>
    </recommendedName>
    <alternativeName>
        <fullName evidence="1">Phosphohexokinase</fullName>
    </alternativeName>
</protein>